<protein>
    <recommendedName>
        <fullName evidence="1">3-demethoxyubiquinol 3-hydroxylase</fullName>
        <shortName evidence="1">DMQ hydroxylase</shortName>
        <ecNumber evidence="1">1.14.99.60</ecNumber>
    </recommendedName>
    <alternativeName>
        <fullName evidence="1">2-nonaprenyl-3-methyl-6-methoxy-1,4-benzoquinol hydroxylase</fullName>
    </alternativeName>
</protein>
<evidence type="ECO:0000255" key="1">
    <source>
        <dbReference type="HAMAP-Rule" id="MF_01658"/>
    </source>
</evidence>
<evidence type="ECO:0000256" key="2">
    <source>
        <dbReference type="SAM" id="MobiDB-lite"/>
    </source>
</evidence>
<accession>Q13TY2</accession>
<reference key="1">
    <citation type="journal article" date="2006" name="Proc. Natl. Acad. Sci. U.S.A.">
        <title>Burkholderia xenovorans LB400 harbors a multi-replicon, 9.73-Mbp genome shaped for versatility.</title>
        <authorList>
            <person name="Chain P.S.G."/>
            <person name="Denef V.J."/>
            <person name="Konstantinidis K.T."/>
            <person name="Vergez L.M."/>
            <person name="Agullo L."/>
            <person name="Reyes V.L."/>
            <person name="Hauser L."/>
            <person name="Cordova M."/>
            <person name="Gomez L."/>
            <person name="Gonzalez M."/>
            <person name="Land M."/>
            <person name="Lao V."/>
            <person name="Larimer F."/>
            <person name="LiPuma J.J."/>
            <person name="Mahenthiralingam E."/>
            <person name="Malfatti S.A."/>
            <person name="Marx C.J."/>
            <person name="Parnell J.J."/>
            <person name="Ramette A."/>
            <person name="Richardson P."/>
            <person name="Seeger M."/>
            <person name="Smith D."/>
            <person name="Spilker T."/>
            <person name="Sul W.J."/>
            <person name="Tsoi T.V."/>
            <person name="Ulrich L.E."/>
            <person name="Zhulin I.B."/>
            <person name="Tiedje J.M."/>
        </authorList>
    </citation>
    <scope>NUCLEOTIDE SEQUENCE [LARGE SCALE GENOMIC DNA]</scope>
    <source>
        <strain>LB400</strain>
    </source>
</reference>
<sequence>MFLDELISEFDRGLRSMTGVSRMSRPLPVPQESAVTEAAPELSPAERAHSAGLMRVNHVGEVCAQALYQAQKLATRSPSLRAVFNHAAIEEEDHLAWTAKRLEALDSRPSLLNPLWYTGALAIGLAAGRMGDRVSLGFMAETERQVEQHLDSHLEQLPEADRESRAIVEQMRVDEVEHGKAAMEAGGIELPFPVRGLMRAVSKVMTRTAYYI</sequence>
<keyword id="KW-1003">Cell membrane</keyword>
<keyword id="KW-0408">Iron</keyword>
<keyword id="KW-0472">Membrane</keyword>
<keyword id="KW-0479">Metal-binding</keyword>
<keyword id="KW-0503">Monooxygenase</keyword>
<keyword id="KW-0560">Oxidoreductase</keyword>
<keyword id="KW-1185">Reference proteome</keyword>
<keyword id="KW-0831">Ubiquinone biosynthesis</keyword>
<dbReference type="EC" id="1.14.99.60" evidence="1"/>
<dbReference type="EMBL" id="CP000270">
    <property type="protein sequence ID" value="ABE32457.1"/>
    <property type="molecule type" value="Genomic_DNA"/>
</dbReference>
<dbReference type="RefSeq" id="WP_011489926.1">
    <property type="nucleotide sequence ID" value="NC_007951.1"/>
</dbReference>
<dbReference type="SMR" id="Q13TY2"/>
<dbReference type="STRING" id="266265.Bxe_A0476"/>
<dbReference type="KEGG" id="bxb:DR64_2652"/>
<dbReference type="KEGG" id="bxe:Bxe_A0476"/>
<dbReference type="PATRIC" id="fig|266265.5.peg.4140"/>
<dbReference type="eggNOG" id="COG2941">
    <property type="taxonomic scope" value="Bacteria"/>
</dbReference>
<dbReference type="OrthoDB" id="5192789at2"/>
<dbReference type="UniPathway" id="UPA00232"/>
<dbReference type="Proteomes" id="UP000001817">
    <property type="component" value="Chromosome 1"/>
</dbReference>
<dbReference type="GO" id="GO:0005886">
    <property type="term" value="C:plasma membrane"/>
    <property type="evidence" value="ECO:0007669"/>
    <property type="project" value="UniProtKB-SubCell"/>
</dbReference>
<dbReference type="GO" id="GO:0008682">
    <property type="term" value="F:3-demethoxyubiquinol 3-hydroxylase activity"/>
    <property type="evidence" value="ECO:0007669"/>
    <property type="project" value="UniProtKB-EC"/>
</dbReference>
<dbReference type="GO" id="GO:0046872">
    <property type="term" value="F:metal ion binding"/>
    <property type="evidence" value="ECO:0007669"/>
    <property type="project" value="UniProtKB-KW"/>
</dbReference>
<dbReference type="GO" id="GO:0006744">
    <property type="term" value="P:ubiquinone biosynthetic process"/>
    <property type="evidence" value="ECO:0007669"/>
    <property type="project" value="UniProtKB-UniRule"/>
</dbReference>
<dbReference type="CDD" id="cd01042">
    <property type="entry name" value="DMQH"/>
    <property type="match status" value="1"/>
</dbReference>
<dbReference type="Gene3D" id="1.20.1260.10">
    <property type="match status" value="1"/>
</dbReference>
<dbReference type="HAMAP" id="MF_01658">
    <property type="entry name" value="COQ7"/>
    <property type="match status" value="1"/>
</dbReference>
<dbReference type="InterPro" id="IPR047809">
    <property type="entry name" value="COQ7_proteobact"/>
</dbReference>
<dbReference type="InterPro" id="IPR012347">
    <property type="entry name" value="Ferritin-like"/>
</dbReference>
<dbReference type="InterPro" id="IPR009078">
    <property type="entry name" value="Ferritin-like_SF"/>
</dbReference>
<dbReference type="InterPro" id="IPR011566">
    <property type="entry name" value="Ubq_synth_Coq7"/>
</dbReference>
<dbReference type="NCBIfam" id="NF033656">
    <property type="entry name" value="DMQ_monoox_COQ7"/>
    <property type="match status" value="1"/>
</dbReference>
<dbReference type="PANTHER" id="PTHR11237:SF4">
    <property type="entry name" value="5-DEMETHOXYUBIQUINONE HYDROXYLASE, MITOCHONDRIAL"/>
    <property type="match status" value="1"/>
</dbReference>
<dbReference type="PANTHER" id="PTHR11237">
    <property type="entry name" value="COENZYME Q10 BIOSYNTHESIS PROTEIN 7"/>
    <property type="match status" value="1"/>
</dbReference>
<dbReference type="Pfam" id="PF03232">
    <property type="entry name" value="COQ7"/>
    <property type="match status" value="1"/>
</dbReference>
<dbReference type="SUPFAM" id="SSF47240">
    <property type="entry name" value="Ferritin-like"/>
    <property type="match status" value="1"/>
</dbReference>
<comment type="function">
    <text evidence="1">Catalyzes the hydroxylation of 2-nonaprenyl-3-methyl-6-methoxy-1,4-benzoquinol during ubiquinone biosynthesis.</text>
</comment>
<comment type="catalytic activity">
    <reaction evidence="1">
        <text>a 5-methoxy-2-methyl-3-(all-trans-polyprenyl)benzene-1,4-diol + AH2 + O2 = a 3-demethylubiquinol + A + H2O</text>
        <dbReference type="Rhea" id="RHEA:50908"/>
        <dbReference type="Rhea" id="RHEA-COMP:10859"/>
        <dbReference type="Rhea" id="RHEA-COMP:10914"/>
        <dbReference type="ChEBI" id="CHEBI:13193"/>
        <dbReference type="ChEBI" id="CHEBI:15377"/>
        <dbReference type="ChEBI" id="CHEBI:15379"/>
        <dbReference type="ChEBI" id="CHEBI:17499"/>
        <dbReference type="ChEBI" id="CHEBI:84167"/>
        <dbReference type="ChEBI" id="CHEBI:84422"/>
        <dbReference type="EC" id="1.14.99.60"/>
    </reaction>
</comment>
<comment type="cofactor">
    <cofactor evidence="1">
        <name>Fe cation</name>
        <dbReference type="ChEBI" id="CHEBI:24875"/>
    </cofactor>
    <text evidence="1">Binds 2 iron ions per subunit.</text>
</comment>
<comment type="pathway">
    <text evidence="1">Cofactor biosynthesis; ubiquinone biosynthesis.</text>
</comment>
<comment type="subcellular location">
    <subcellularLocation>
        <location evidence="1">Cell membrane</location>
        <topology evidence="1">Peripheral membrane protein</topology>
    </subcellularLocation>
</comment>
<comment type="similarity">
    <text evidence="1">Belongs to the COQ7 family.</text>
</comment>
<feature type="chain" id="PRO_0000338677" description="3-demethoxyubiquinol 3-hydroxylase">
    <location>
        <begin position="1"/>
        <end position="212"/>
    </location>
</feature>
<feature type="region of interest" description="Disordered" evidence="2">
    <location>
        <begin position="21"/>
        <end position="42"/>
    </location>
</feature>
<feature type="binding site" evidence="1">
    <location>
        <position position="61"/>
    </location>
    <ligand>
        <name>Fe cation</name>
        <dbReference type="ChEBI" id="CHEBI:24875"/>
        <label>1</label>
    </ligand>
</feature>
<feature type="binding site" evidence="1">
    <location>
        <position position="91"/>
    </location>
    <ligand>
        <name>Fe cation</name>
        <dbReference type="ChEBI" id="CHEBI:24875"/>
        <label>1</label>
    </ligand>
</feature>
<feature type="binding site" evidence="1">
    <location>
        <position position="91"/>
    </location>
    <ligand>
        <name>Fe cation</name>
        <dbReference type="ChEBI" id="CHEBI:24875"/>
        <label>2</label>
    </ligand>
</feature>
<feature type="binding site" evidence="1">
    <location>
        <position position="94"/>
    </location>
    <ligand>
        <name>Fe cation</name>
        <dbReference type="ChEBI" id="CHEBI:24875"/>
        <label>1</label>
    </ligand>
</feature>
<feature type="binding site" evidence="1">
    <location>
        <position position="143"/>
    </location>
    <ligand>
        <name>Fe cation</name>
        <dbReference type="ChEBI" id="CHEBI:24875"/>
        <label>2</label>
    </ligand>
</feature>
<feature type="binding site" evidence="1">
    <location>
        <position position="175"/>
    </location>
    <ligand>
        <name>Fe cation</name>
        <dbReference type="ChEBI" id="CHEBI:24875"/>
        <label>1</label>
    </ligand>
</feature>
<feature type="binding site" evidence="1">
    <location>
        <position position="175"/>
    </location>
    <ligand>
        <name>Fe cation</name>
        <dbReference type="ChEBI" id="CHEBI:24875"/>
        <label>2</label>
    </ligand>
</feature>
<feature type="binding site" evidence="1">
    <location>
        <position position="178"/>
    </location>
    <ligand>
        <name>Fe cation</name>
        <dbReference type="ChEBI" id="CHEBI:24875"/>
        <label>2</label>
    </ligand>
</feature>
<name>COQ7_PARXL</name>
<organism>
    <name type="scientific">Paraburkholderia xenovorans (strain LB400)</name>
    <dbReference type="NCBI Taxonomy" id="266265"/>
    <lineage>
        <taxon>Bacteria</taxon>
        <taxon>Pseudomonadati</taxon>
        <taxon>Pseudomonadota</taxon>
        <taxon>Betaproteobacteria</taxon>
        <taxon>Burkholderiales</taxon>
        <taxon>Burkholderiaceae</taxon>
        <taxon>Paraburkholderia</taxon>
    </lineage>
</organism>
<gene>
    <name evidence="1" type="primary">coq7</name>
    <name type="ordered locus">Bxeno_A3919</name>
    <name type="ORF">Bxe_A0476</name>
</gene>
<proteinExistence type="inferred from homology"/>